<dbReference type="EC" id="2.1.1.45" evidence="1"/>
<dbReference type="EMBL" id="AM233362">
    <property type="protein sequence ID" value="CAJ79154.1"/>
    <property type="molecule type" value="Genomic_DNA"/>
</dbReference>
<dbReference type="RefSeq" id="WP_003015196.1">
    <property type="nucleotide sequence ID" value="NZ_CP009694.1"/>
</dbReference>
<dbReference type="SMR" id="Q2A486"/>
<dbReference type="KEGG" id="ftl:FTL_0715"/>
<dbReference type="UniPathway" id="UPA00575"/>
<dbReference type="Proteomes" id="UP000001944">
    <property type="component" value="Chromosome"/>
</dbReference>
<dbReference type="GO" id="GO:0005829">
    <property type="term" value="C:cytosol"/>
    <property type="evidence" value="ECO:0007669"/>
    <property type="project" value="TreeGrafter"/>
</dbReference>
<dbReference type="GO" id="GO:0004799">
    <property type="term" value="F:thymidylate synthase activity"/>
    <property type="evidence" value="ECO:0007669"/>
    <property type="project" value="UniProtKB-UniRule"/>
</dbReference>
<dbReference type="GO" id="GO:0006231">
    <property type="term" value="P:dTMP biosynthetic process"/>
    <property type="evidence" value="ECO:0007669"/>
    <property type="project" value="UniProtKB-UniRule"/>
</dbReference>
<dbReference type="GO" id="GO:0006235">
    <property type="term" value="P:dTTP biosynthetic process"/>
    <property type="evidence" value="ECO:0007669"/>
    <property type="project" value="UniProtKB-UniRule"/>
</dbReference>
<dbReference type="GO" id="GO:0032259">
    <property type="term" value="P:methylation"/>
    <property type="evidence" value="ECO:0007669"/>
    <property type="project" value="UniProtKB-KW"/>
</dbReference>
<dbReference type="CDD" id="cd00351">
    <property type="entry name" value="TS_Pyrimidine_HMase"/>
    <property type="match status" value="1"/>
</dbReference>
<dbReference type="FunFam" id="3.30.572.10:FF:000013">
    <property type="entry name" value="Thymidylate synthase"/>
    <property type="match status" value="1"/>
</dbReference>
<dbReference type="Gene3D" id="3.30.572.10">
    <property type="entry name" value="Thymidylate synthase/dCMP hydroxymethylase domain"/>
    <property type="match status" value="1"/>
</dbReference>
<dbReference type="HAMAP" id="MF_00008">
    <property type="entry name" value="Thymidy_synth_bact"/>
    <property type="match status" value="1"/>
</dbReference>
<dbReference type="InterPro" id="IPR045097">
    <property type="entry name" value="Thymidate_synth/dCMP_Mease"/>
</dbReference>
<dbReference type="InterPro" id="IPR023451">
    <property type="entry name" value="Thymidate_synth/dCMP_Mease_dom"/>
</dbReference>
<dbReference type="InterPro" id="IPR036926">
    <property type="entry name" value="Thymidate_synth/dCMP_Mease_sf"/>
</dbReference>
<dbReference type="InterPro" id="IPR000398">
    <property type="entry name" value="Thymidylate_synthase"/>
</dbReference>
<dbReference type="NCBIfam" id="NF002497">
    <property type="entry name" value="PRK01827.1-3"/>
    <property type="match status" value="1"/>
</dbReference>
<dbReference type="NCBIfam" id="NF002499">
    <property type="entry name" value="PRK01827.1-5"/>
    <property type="match status" value="1"/>
</dbReference>
<dbReference type="NCBIfam" id="TIGR03284">
    <property type="entry name" value="thym_sym"/>
    <property type="match status" value="2"/>
</dbReference>
<dbReference type="PANTHER" id="PTHR11548">
    <property type="entry name" value="THYMIDYLATE SYNTHASE 1"/>
    <property type="match status" value="1"/>
</dbReference>
<dbReference type="PANTHER" id="PTHR11548:SF1">
    <property type="entry name" value="THYMIDYLATE SYNTHASE 1"/>
    <property type="match status" value="1"/>
</dbReference>
<dbReference type="Pfam" id="PF00303">
    <property type="entry name" value="Thymidylat_synt"/>
    <property type="match status" value="1"/>
</dbReference>
<dbReference type="PRINTS" id="PR00108">
    <property type="entry name" value="THYMDSNTHASE"/>
</dbReference>
<dbReference type="SUPFAM" id="SSF55831">
    <property type="entry name" value="Thymidylate synthase/dCMP hydroxymethylase"/>
    <property type="match status" value="1"/>
</dbReference>
<accession>Q2A486</accession>
<comment type="function">
    <text evidence="1">Catalyzes the reductive methylation of 2'-deoxyuridine-5'-monophosphate (dUMP) to 2'-deoxythymidine-5'-monophosphate (dTMP) while utilizing 5,10-methylenetetrahydrofolate (mTHF) as the methyl donor and reductant in the reaction, yielding dihydrofolate (DHF) as a by-product. This enzymatic reaction provides an intracellular de novo source of dTMP, an essential precursor for DNA biosynthesis.</text>
</comment>
<comment type="catalytic activity">
    <reaction evidence="1">
        <text>dUMP + (6R)-5,10-methylene-5,6,7,8-tetrahydrofolate = 7,8-dihydrofolate + dTMP</text>
        <dbReference type="Rhea" id="RHEA:12104"/>
        <dbReference type="ChEBI" id="CHEBI:15636"/>
        <dbReference type="ChEBI" id="CHEBI:57451"/>
        <dbReference type="ChEBI" id="CHEBI:63528"/>
        <dbReference type="ChEBI" id="CHEBI:246422"/>
        <dbReference type="EC" id="2.1.1.45"/>
    </reaction>
</comment>
<comment type="pathway">
    <text evidence="1">Pyrimidine metabolism; dTTP biosynthesis.</text>
</comment>
<comment type="subunit">
    <text evidence="1">Homodimer.</text>
</comment>
<comment type="subcellular location">
    <subcellularLocation>
        <location evidence="1">Cytoplasm</location>
    </subcellularLocation>
</comment>
<comment type="similarity">
    <text evidence="1">Belongs to the thymidylate synthase family. Bacterial-type ThyA subfamily.</text>
</comment>
<reference key="1">
    <citation type="submission" date="2006-03" db="EMBL/GenBank/DDBJ databases">
        <title>Complete genome sequence of Francisella tularensis LVS (Live Vaccine Strain).</title>
        <authorList>
            <person name="Chain P."/>
            <person name="Larimer F."/>
            <person name="Land M."/>
            <person name="Stilwagen S."/>
            <person name="Larsson P."/>
            <person name="Bearden S."/>
            <person name="Chu M."/>
            <person name="Oyston P."/>
            <person name="Forsman M."/>
            <person name="Andersson S."/>
            <person name="Lindler L."/>
            <person name="Titball R."/>
            <person name="Garcia E."/>
        </authorList>
    </citation>
    <scope>NUCLEOTIDE SEQUENCE [LARGE SCALE GENOMIC DNA]</scope>
    <source>
        <strain>LVS</strain>
    </source>
</reference>
<gene>
    <name evidence="1" type="primary">thyA</name>
    <name type="ordered locus">FTL_0715</name>
</gene>
<protein>
    <recommendedName>
        <fullName evidence="1">Thymidylate synthase</fullName>
        <shortName evidence="1">TS</shortName>
        <shortName evidence="1">TSase</shortName>
        <ecNumber evidence="1">2.1.1.45</ecNumber>
    </recommendedName>
</protein>
<name>TYSY_FRATH</name>
<keyword id="KW-0963">Cytoplasm</keyword>
<keyword id="KW-0489">Methyltransferase</keyword>
<keyword id="KW-0545">Nucleotide biosynthesis</keyword>
<keyword id="KW-1185">Reference proteome</keyword>
<keyword id="KW-0808">Transferase</keyword>
<organism>
    <name type="scientific">Francisella tularensis subsp. holarctica (strain LVS)</name>
    <dbReference type="NCBI Taxonomy" id="376619"/>
    <lineage>
        <taxon>Bacteria</taxon>
        <taxon>Pseudomonadati</taxon>
        <taxon>Pseudomonadota</taxon>
        <taxon>Gammaproteobacteria</taxon>
        <taxon>Thiotrichales</taxon>
        <taxon>Francisellaceae</taxon>
        <taxon>Francisella</taxon>
    </lineage>
</organism>
<proteinExistence type="inferred from homology"/>
<sequence length="274" mass="31415">MREYLNFLKYIKENGVLKNDRTGTGTRSIFGYQMRFDLQKGFPLVTTKKIHIPSVVHELLWFLSGSTNIKYLNDNNVRIWNEWATVDGELGPIYGKQWRDFNGQGIDQIADVIQMLKTNPNSRRILVLAWNPCVVPSEKISPQENVVKGNSALPPCHAMFQFYVANNKLSCMLTQRSADAFLGVPFNIASYSLLTHMVAQQCNLDVGELIWSGGDCHIYNNHIEQVNEQLSREPLALPTLKILRKSNSIFDYKYEDFEFENYNHHPAIKAKISV</sequence>
<feature type="chain" id="PRO_1000000599" description="Thymidylate synthase">
    <location>
        <begin position="1"/>
        <end position="274"/>
    </location>
</feature>
<feature type="active site" description="Nucleophile" evidence="1">
    <location>
        <position position="156"/>
    </location>
</feature>
<feature type="binding site" description="in other chain" evidence="1">
    <location>
        <position position="21"/>
    </location>
    <ligand>
        <name>dUMP</name>
        <dbReference type="ChEBI" id="CHEBI:246422"/>
        <note>ligand shared between dimeric partners</note>
    </ligand>
</feature>
<feature type="binding site" evidence="1">
    <location>
        <position position="51"/>
    </location>
    <ligand>
        <name>(6R)-5,10-methylene-5,6,7,8-tetrahydrofolate</name>
        <dbReference type="ChEBI" id="CHEBI:15636"/>
    </ligand>
</feature>
<feature type="binding site" evidence="1">
    <location>
        <begin position="123"/>
        <end position="124"/>
    </location>
    <ligand>
        <name>dUMP</name>
        <dbReference type="ChEBI" id="CHEBI:246422"/>
        <note>ligand shared between dimeric partners</note>
    </ligand>
</feature>
<feature type="binding site" description="in other chain" evidence="1">
    <location>
        <begin position="176"/>
        <end position="179"/>
    </location>
    <ligand>
        <name>dUMP</name>
        <dbReference type="ChEBI" id="CHEBI:246422"/>
        <note>ligand shared between dimeric partners</note>
    </ligand>
</feature>
<feature type="binding site" evidence="1">
    <location>
        <position position="179"/>
    </location>
    <ligand>
        <name>(6R)-5,10-methylene-5,6,7,8-tetrahydrofolate</name>
        <dbReference type="ChEBI" id="CHEBI:15636"/>
    </ligand>
</feature>
<feature type="binding site" description="in other chain" evidence="1">
    <location>
        <position position="187"/>
    </location>
    <ligand>
        <name>dUMP</name>
        <dbReference type="ChEBI" id="CHEBI:246422"/>
        <note>ligand shared between dimeric partners</note>
    </ligand>
</feature>
<feature type="binding site" description="in other chain" evidence="1">
    <location>
        <begin position="217"/>
        <end position="219"/>
    </location>
    <ligand>
        <name>dUMP</name>
        <dbReference type="ChEBI" id="CHEBI:246422"/>
        <note>ligand shared between dimeric partners</note>
    </ligand>
</feature>
<feature type="binding site" evidence="1">
    <location>
        <position position="273"/>
    </location>
    <ligand>
        <name>(6R)-5,10-methylene-5,6,7,8-tetrahydrofolate</name>
        <dbReference type="ChEBI" id="CHEBI:15636"/>
    </ligand>
</feature>
<evidence type="ECO:0000255" key="1">
    <source>
        <dbReference type="HAMAP-Rule" id="MF_00008"/>
    </source>
</evidence>